<feature type="chain" id="PRO_0000458585" description="Small ribosomal subunit protein mS47">
    <location>
        <begin position="1"/>
        <end position="508"/>
    </location>
</feature>
<comment type="function">
    <text evidence="1 5">Component of the mitochondrial ribosome (mitoribosome), a dedicated translation machinery responsible for the synthesis of mitochondrial genome-encoded proteins, including at least some of the essential transmembrane subunits of the mitochondrial respiratory chain. The mitoribosomes are attached to the mitochondrial inner membrane and translation products are cotranslationally integrated into the membrane (Probable). mS47 has enzymatic activity in vitro, and is able to catalyze the specific hydrolysis of 3-hydroxyisobutyryl-CoA (HIBYL-CoA). However, because the turnover rate of mS47 is only a fraction of that of the homologous mammalian enzyme, the physiological function of this activity remains unclear (By similarity).</text>
</comment>
<comment type="catalytic activity">
    <reaction evidence="1">
        <text>3-hydroxy-2-methylpropanoyl-CoA + H2O = 3-hydroxy-2-methylpropanoate + CoA + H(+)</text>
        <dbReference type="Rhea" id="RHEA:20888"/>
        <dbReference type="ChEBI" id="CHEBI:11805"/>
        <dbReference type="ChEBI" id="CHEBI:15377"/>
        <dbReference type="ChEBI" id="CHEBI:15378"/>
        <dbReference type="ChEBI" id="CHEBI:57287"/>
        <dbReference type="ChEBI" id="CHEBI:57340"/>
        <dbReference type="EC" id="3.1.2.4"/>
    </reaction>
</comment>
<comment type="subunit">
    <text evidence="2">Component of the mitochondrial small ribosomal subunit (mt-SSU). Mature N.crassa 74S mitochondrial ribosomes consist of a small (37S) and a large (54S) subunit. The 37S small subunit contains a 16S ribosomal RNA (16S mt-rRNA) and 32 different proteins. The 54S large subunit contains a 23S rRNA (23S mt-rRNA) and 42 different proteins. mS47 forms a protuberance of the N.crassa mitoribosome and retains a solvent-exposed cavity liekly capable of accommodating a substrate, in accordance with it being an active enzyme as well as an integral constituent of the mitoribosome.</text>
</comment>
<comment type="subcellular location">
    <subcellularLocation>
        <location evidence="2">Mitochondrion</location>
    </subcellularLocation>
</comment>
<comment type="similarity">
    <text evidence="4">Belongs to the enoyl-CoA hydratase/isomerase family. Mitochondrion-specific ribosomal protein mS47 subfamily.</text>
</comment>
<dbReference type="EC" id="3.1.2.4" evidence="1"/>
<dbReference type="EMBL" id="CM002240">
    <property type="protein sequence ID" value="EAA31887.1"/>
    <property type="molecule type" value="Genomic_DNA"/>
</dbReference>
<dbReference type="RefSeq" id="XP_961123.1">
    <property type="nucleotide sequence ID" value="XM_956030.2"/>
</dbReference>
<dbReference type="PDB" id="6YW5">
    <property type="method" value="EM"/>
    <property type="resolution" value="2.85 A"/>
    <property type="chains" value="88=1-508"/>
</dbReference>
<dbReference type="PDB" id="6YWX">
    <property type="method" value="EM"/>
    <property type="resolution" value="3.10 A"/>
    <property type="chains" value="88=1-508"/>
</dbReference>
<dbReference type="PDBsum" id="6YW5"/>
<dbReference type="PDBsum" id="6YWX"/>
<dbReference type="EMDB" id="EMD-10958"/>
<dbReference type="EMDB" id="EMD-10978"/>
<dbReference type="SMR" id="Q1K7A4"/>
<dbReference type="FunCoup" id="Q1K7A4">
    <property type="interactions" value="671"/>
</dbReference>
<dbReference type="STRING" id="367110.Q1K7A4"/>
<dbReference type="PaxDb" id="5141-EFNCRP00000003331"/>
<dbReference type="EnsemblFungi" id="EAA31887">
    <property type="protein sequence ID" value="EAA31887"/>
    <property type="gene ID" value="NCU03777"/>
</dbReference>
<dbReference type="GeneID" id="3877257"/>
<dbReference type="KEGG" id="ncr:NCU03777"/>
<dbReference type="VEuPathDB" id="FungiDB:NCU03777"/>
<dbReference type="HOGENOM" id="CLU_009834_22_0_1"/>
<dbReference type="InParanoid" id="Q1K7A4"/>
<dbReference type="OMA" id="EVFTMEY"/>
<dbReference type="OrthoDB" id="1737613at2759"/>
<dbReference type="Proteomes" id="UP000001805">
    <property type="component" value="Chromosome 2, Linkage Group V"/>
</dbReference>
<dbReference type="GO" id="GO:0005739">
    <property type="term" value="C:mitochondrion"/>
    <property type="evidence" value="ECO:0000318"/>
    <property type="project" value="GO_Central"/>
</dbReference>
<dbReference type="GO" id="GO:0003860">
    <property type="term" value="F:3-hydroxyisobutyryl-CoA hydrolase activity"/>
    <property type="evidence" value="ECO:0000318"/>
    <property type="project" value="GO_Central"/>
</dbReference>
<dbReference type="GO" id="GO:0006574">
    <property type="term" value="P:valine catabolic process"/>
    <property type="evidence" value="ECO:0000318"/>
    <property type="project" value="GO_Central"/>
</dbReference>
<dbReference type="CDD" id="cd06558">
    <property type="entry name" value="crotonase-like"/>
    <property type="match status" value="1"/>
</dbReference>
<dbReference type="FunFam" id="3.90.226.10:FF:000026">
    <property type="entry name" value="3-hydroxyisobutyryl-CoA hydrolase, mitochondrial"/>
    <property type="match status" value="1"/>
</dbReference>
<dbReference type="Gene3D" id="3.90.226.10">
    <property type="entry name" value="2-enoyl-CoA Hydratase, Chain A, domain 1"/>
    <property type="match status" value="1"/>
</dbReference>
<dbReference type="InterPro" id="IPR029045">
    <property type="entry name" value="ClpP/crotonase-like_dom_sf"/>
</dbReference>
<dbReference type="InterPro" id="IPR045004">
    <property type="entry name" value="ECH_dom"/>
</dbReference>
<dbReference type="InterPro" id="IPR018376">
    <property type="entry name" value="Enoyl-CoA_hyd/isom_CS"/>
</dbReference>
<dbReference type="InterPro" id="IPR032259">
    <property type="entry name" value="HIBYL-CoA-H"/>
</dbReference>
<dbReference type="NCBIfam" id="NF004127">
    <property type="entry name" value="PRK05617.1"/>
    <property type="match status" value="1"/>
</dbReference>
<dbReference type="PANTHER" id="PTHR43176:SF3">
    <property type="entry name" value="3-HYDROXYISOBUTYRYL-COA HYDROLASE, MITOCHONDRIAL"/>
    <property type="match status" value="1"/>
</dbReference>
<dbReference type="PANTHER" id="PTHR43176">
    <property type="entry name" value="3-HYDROXYISOBUTYRYL-COA HYDROLASE-RELATED"/>
    <property type="match status" value="1"/>
</dbReference>
<dbReference type="Pfam" id="PF16113">
    <property type="entry name" value="ECH_2"/>
    <property type="match status" value="1"/>
</dbReference>
<dbReference type="SUPFAM" id="SSF52096">
    <property type="entry name" value="ClpP/crotonase"/>
    <property type="match status" value="1"/>
</dbReference>
<dbReference type="PROSITE" id="PS00166">
    <property type="entry name" value="ENOYL_COA_HYDRATASE"/>
    <property type="match status" value="1"/>
</dbReference>
<accession>Q1K7A4</accession>
<evidence type="ECO:0000250" key="1">
    <source>
        <dbReference type="UniProtKB" id="P28817"/>
    </source>
</evidence>
<evidence type="ECO:0000269" key="2">
    <source>
    </source>
</evidence>
<evidence type="ECO:0000303" key="3">
    <source>
    </source>
</evidence>
<evidence type="ECO:0000305" key="4"/>
<evidence type="ECO:0000305" key="5">
    <source>
    </source>
</evidence>
<evidence type="ECO:0007744" key="6">
    <source>
        <dbReference type="PDB" id="6YW5"/>
    </source>
</evidence>
<evidence type="ECO:0007744" key="7">
    <source>
        <dbReference type="PDB" id="6YWX"/>
    </source>
</evidence>
<proteinExistence type="evidence at protein level"/>
<sequence>MLVSKSIASRAGLASAVASRSCRPSFTAMPLRAKVLGQQAPISTQAAAELFKPVEGDEPEDVLFNSLYNLRSVELNRPAKYNALNGSMIRKIAPRLLEWERSDMANVIVIKGSGEKAFCAGGDVAALAKQNAEGPEGVKKSVDYFGLEYKLNHLISTYTRPYVAFLDGITMGGGVGLSIHAPFRIATERTVFAMPETKIGFFPDVGASFFLPRMPGQVGPYLGLTSALLKGVQVYYAGIATHYLHSSSLPALESRLAELTPRDYWTIEQRLSVINDTIEEFSTGVPYDENIEIGGKIRLAIDRCFKYDKIDEIIAALKEEAAEGAKGGVQSWAKNTLEELTQRSPTSLHVTLRQMRLGKSWGIAHTFKREHQMAAKFMKSHDFNEGVTALLIDKGANGPAKWKPASLDEIPPGANISEDYFRNDPEVPVLELLNDRSYMQYPYNKFGLPNDYDVKEAIEKGNFTREKLIDHFVETRRGKQGVREAVSDVLDRMAVRSKGTEHVQWKKE</sequence>
<keyword id="KW-0002">3D-structure</keyword>
<keyword id="KW-0378">Hydrolase</keyword>
<keyword id="KW-0496">Mitochondrion</keyword>
<keyword id="KW-1185">Reference proteome</keyword>
<protein>
    <recommendedName>
        <fullName evidence="3">Small ribosomal subunit protein mS47</fullName>
    </recommendedName>
    <alternativeName>
        <fullName>3-hydroxyisobutyryl-CoA hydrolase, mitochondrial</fullName>
        <ecNumber evidence="1">3.1.2.4</ecNumber>
    </alternativeName>
    <alternativeName>
        <fullName>3-hydroxyisobutyryl-coenzyme A hydrolase</fullName>
        <shortName>HIB-CoA hydrolase</shortName>
        <shortName>HIBYL-CoA-H</shortName>
    </alternativeName>
</protein>
<reference key="1">
    <citation type="journal article" date="2003" name="Nature">
        <title>The genome sequence of the filamentous fungus Neurospora crassa.</title>
        <authorList>
            <person name="Galagan J.E."/>
            <person name="Calvo S.E."/>
            <person name="Borkovich K.A."/>
            <person name="Selker E.U."/>
            <person name="Read N.D."/>
            <person name="Jaffe D.B."/>
            <person name="FitzHugh W."/>
            <person name="Ma L.-J."/>
            <person name="Smirnov S."/>
            <person name="Purcell S."/>
            <person name="Rehman B."/>
            <person name="Elkins T."/>
            <person name="Engels R."/>
            <person name="Wang S."/>
            <person name="Nielsen C.B."/>
            <person name="Butler J."/>
            <person name="Endrizzi M."/>
            <person name="Qui D."/>
            <person name="Ianakiev P."/>
            <person name="Bell-Pedersen D."/>
            <person name="Nelson M.A."/>
            <person name="Werner-Washburne M."/>
            <person name="Selitrennikoff C.P."/>
            <person name="Kinsey J.A."/>
            <person name="Braun E.L."/>
            <person name="Zelter A."/>
            <person name="Schulte U."/>
            <person name="Kothe G.O."/>
            <person name="Jedd G."/>
            <person name="Mewes H.-W."/>
            <person name="Staben C."/>
            <person name="Marcotte E."/>
            <person name="Greenberg D."/>
            <person name="Roy A."/>
            <person name="Foley K."/>
            <person name="Naylor J."/>
            <person name="Stange-Thomann N."/>
            <person name="Barrett R."/>
            <person name="Gnerre S."/>
            <person name="Kamal M."/>
            <person name="Kamvysselis M."/>
            <person name="Mauceli E.W."/>
            <person name="Bielke C."/>
            <person name="Rudd S."/>
            <person name="Frishman D."/>
            <person name="Krystofova S."/>
            <person name="Rasmussen C."/>
            <person name="Metzenberg R.L."/>
            <person name="Perkins D.D."/>
            <person name="Kroken S."/>
            <person name="Cogoni C."/>
            <person name="Macino G."/>
            <person name="Catcheside D.E.A."/>
            <person name="Li W."/>
            <person name="Pratt R.J."/>
            <person name="Osmani S.A."/>
            <person name="DeSouza C.P.C."/>
            <person name="Glass N.L."/>
            <person name="Orbach M.J."/>
            <person name="Berglund J.A."/>
            <person name="Voelker R."/>
            <person name="Yarden O."/>
            <person name="Plamann M."/>
            <person name="Seiler S."/>
            <person name="Dunlap J.C."/>
            <person name="Radford A."/>
            <person name="Aramayo R."/>
            <person name="Natvig D.O."/>
            <person name="Alex L.A."/>
            <person name="Mannhaupt G."/>
            <person name="Ebbole D.J."/>
            <person name="Freitag M."/>
            <person name="Paulsen I."/>
            <person name="Sachs M.S."/>
            <person name="Lander E.S."/>
            <person name="Nusbaum C."/>
            <person name="Birren B.W."/>
        </authorList>
    </citation>
    <scope>NUCLEOTIDE SEQUENCE [LARGE SCALE GENOMIC DNA]</scope>
    <source>
        <strain>ATCC 24698 / 74-OR23-1A / CBS 708.71 / DSM 1257 / FGSC 987</strain>
    </source>
</reference>
<reference evidence="6 7" key="2">
    <citation type="journal article" date="2020" name="Nat. Commun.">
        <title>Analysis of translating mitoribosome reveals functional characteristics of translation in mitochondria of fungi.</title>
        <authorList>
            <person name="Itoh Y."/>
            <person name="Naschberger A."/>
            <person name="Mortezaei N."/>
            <person name="Herrmann J.M."/>
            <person name="Amunts A."/>
        </authorList>
    </citation>
    <scope>STRUCTURE BY ELECTRON MICROSCOPY (2.85 ANGSTROMS)</scope>
</reference>
<organism>
    <name type="scientific">Neurospora crassa (strain ATCC 24698 / 74-OR23-1A / CBS 708.71 / DSM 1257 / FGSC 987)</name>
    <dbReference type="NCBI Taxonomy" id="367110"/>
    <lineage>
        <taxon>Eukaryota</taxon>
        <taxon>Fungi</taxon>
        <taxon>Dikarya</taxon>
        <taxon>Ascomycota</taxon>
        <taxon>Pezizomycotina</taxon>
        <taxon>Sordariomycetes</taxon>
        <taxon>Sordariomycetidae</taxon>
        <taxon>Sordariales</taxon>
        <taxon>Sordariaceae</taxon>
        <taxon>Neurospora</taxon>
    </lineage>
</organism>
<gene>
    <name type="primary">ehd3</name>
    <name type="synonym">mrp5</name>
    <name type="ORF">NCU03777</name>
</gene>
<name>HIBCH_NEUCR</name>